<name>LANE_STAEP</name>
<comment type="function">
    <text>Lanthionine-containing peptide antibiotic (lantibiotic) active on Gram-positive bacteria. The bactericidal activity of lantibiotics is based on depolarization of energized bacterial cytoplasmic membranes, initiated by the formation of aqueous transmembrane pores.</text>
</comment>
<comment type="PTM">
    <text>Maturation of lantibiotics involves the enzymatic conversion of Thr, and Ser into dehydrated AA and the formation of thioether bonds with cysteine. The C-terminal lanthionine undergoes decarboxylation. This is followed by membrane translocation and cleavage of the modified precursor.</text>
</comment>
<comment type="PTM">
    <text evidence="2">The 2,3-didehydrobutyrine is determined to be the Z-isomer.</text>
</comment>
<comment type="similarity">
    <text evidence="3">Belongs to the type A lantibiotic family.</text>
</comment>
<accession>P08136</accession>
<accession>Q54093</accession>
<evidence type="ECO:0000269" key="1">
    <source>
    </source>
</evidence>
<evidence type="ECO:0000269" key="2">
    <source>
    </source>
</evidence>
<evidence type="ECO:0000305" key="3"/>
<proteinExistence type="evidence at protein level"/>
<sequence length="52" mass="5632">MEAVKEKNDLFNLDVKVNAKESNDSGAEPRIASKFICTPGCAKTGSFNSYCC</sequence>
<geneLocation type="plasmid">
    <name>pTu 32</name>
</geneLocation>
<dbReference type="EMBL" id="X07840">
    <property type="protein sequence ID" value="CAA30689.1"/>
    <property type="molecule type" value="Genomic_DNA"/>
</dbReference>
<dbReference type="EMBL" id="X07840">
    <property type="protein sequence ID" value="CAA30690.1"/>
    <property type="molecule type" value="Genomic_DNA"/>
</dbReference>
<dbReference type="EMBL" id="X62386">
    <property type="protein sequence ID" value="CAA44252.1"/>
    <property type="molecule type" value="Genomic_DNA"/>
</dbReference>
<dbReference type="PIR" id="S00768">
    <property type="entry name" value="EPSED"/>
</dbReference>
<dbReference type="RefSeq" id="WP_002498697.1">
    <property type="nucleotide sequence ID" value="NZ_CP090942.1"/>
</dbReference>
<dbReference type="PDB" id="1G5Q">
    <property type="method" value="X-ray"/>
    <property type="resolution" value="2.57 A"/>
    <property type="chains" value="M/N/O/P=48-52"/>
</dbReference>
<dbReference type="PDBsum" id="1G5Q"/>
<dbReference type="SMR" id="P08136"/>
<dbReference type="TCDB" id="1.C.20.1.6">
    <property type="family name" value="the nisin (nisin) family"/>
</dbReference>
<dbReference type="EvolutionaryTrace" id="P08136"/>
<dbReference type="GO" id="GO:0005576">
    <property type="term" value="C:extracellular region"/>
    <property type="evidence" value="ECO:0007669"/>
    <property type="project" value="InterPro"/>
</dbReference>
<dbReference type="GO" id="GO:0005102">
    <property type="term" value="F:signaling receptor binding"/>
    <property type="evidence" value="ECO:0007669"/>
    <property type="project" value="UniProtKB-KW"/>
</dbReference>
<dbReference type="GO" id="GO:0042742">
    <property type="term" value="P:defense response to bacterium"/>
    <property type="evidence" value="ECO:0007669"/>
    <property type="project" value="UniProtKB-KW"/>
</dbReference>
<dbReference type="GO" id="GO:0031640">
    <property type="term" value="P:killing of cells of another organism"/>
    <property type="evidence" value="ECO:0007669"/>
    <property type="project" value="UniProtKB-KW"/>
</dbReference>
<dbReference type="InterPro" id="IPR006079">
    <property type="entry name" value="Lantibiotic_typ-A_Bacillales"/>
</dbReference>
<dbReference type="NCBIfam" id="NF038155">
    <property type="entry name" value="lanthi_I_FDLD"/>
    <property type="match status" value="1"/>
</dbReference>
<dbReference type="NCBIfam" id="TIGR03731">
    <property type="entry name" value="lantibio_gallid"/>
    <property type="match status" value="1"/>
</dbReference>
<dbReference type="Pfam" id="PF02052">
    <property type="entry name" value="Gallidermin"/>
    <property type="match status" value="1"/>
</dbReference>
<dbReference type="PRINTS" id="PR00323">
    <property type="entry name" value="GALLIDERMIN"/>
</dbReference>
<protein>
    <recommendedName>
        <fullName>Lantibiotic epidermin</fullName>
    </recommendedName>
</protein>
<feature type="propeptide" id="PRO_0000017116" evidence="2">
    <location>
        <begin position="1"/>
        <end position="30"/>
    </location>
</feature>
<feature type="peptide" id="PRO_0000017117" description="Lantibiotic epidermin" evidence="1">
    <location>
        <begin position="31"/>
        <end position="52"/>
    </location>
</feature>
<feature type="modified residue" description="(Z)-2,3-didehydrobutyrine" evidence="2">
    <location>
        <position position="44"/>
    </location>
</feature>
<feature type="cross-link" description="Lanthionine (Ser-Cys)" evidence="2">
    <location>
        <begin position="33"/>
        <end position="37"/>
    </location>
</feature>
<feature type="cross-link" description="Beta-methyllanthionine (Thr-Cys)" evidence="2">
    <location>
        <begin position="38"/>
        <end position="41"/>
    </location>
</feature>
<feature type="cross-link" description="Lanthionine (Ser-Cys)" evidence="2">
    <location>
        <begin position="46"/>
        <end position="51"/>
    </location>
</feature>
<feature type="cross-link" description="S-(2-aminovinyl)-D-cysteine (Ser-Cys)" evidence="2">
    <location>
        <begin position="49"/>
        <end position="52"/>
    </location>
</feature>
<keyword id="KW-0002">3D-structure</keyword>
<keyword id="KW-0044">Antibiotic</keyword>
<keyword id="KW-0929">Antimicrobial</keyword>
<keyword id="KW-0078">Bacteriocin</keyword>
<keyword id="KW-0208">D-amino acid</keyword>
<keyword id="KW-0903">Direct protein sequencing</keyword>
<keyword id="KW-0425">Lantibiotic</keyword>
<keyword id="KW-0614">Plasmid</keyword>
<keyword id="KW-0883">Thioether bond</keyword>
<organism>
    <name type="scientific">Staphylococcus epidermidis</name>
    <dbReference type="NCBI Taxonomy" id="1282"/>
    <lineage>
        <taxon>Bacteria</taxon>
        <taxon>Bacillati</taxon>
        <taxon>Bacillota</taxon>
        <taxon>Bacilli</taxon>
        <taxon>Bacillales</taxon>
        <taxon>Staphylococcaceae</taxon>
        <taxon>Staphylococcus</taxon>
    </lineage>
</organism>
<gene>
    <name type="primary">epiA</name>
</gene>
<reference key="1">
    <citation type="journal article" date="1988" name="Nature">
        <title>Prepeptide sequence of epidermin, a ribosomally synthesized antibiotic with four sulphide-rings.</title>
        <authorList>
            <person name="Schnell N."/>
            <person name="Entian K.-D."/>
            <person name="Schneider U."/>
            <person name="Gotz F."/>
            <person name="Zahner H."/>
            <person name="Kellner R."/>
            <person name="Jung G."/>
        </authorList>
    </citation>
    <scope>NUCLEOTIDE SEQUENCE [GENOMIC DNA]</scope>
    <source>
        <strain>TU 3298 / DSM 3095</strain>
    </source>
</reference>
<reference key="2">
    <citation type="journal article" date="1992" name="Eur. J. Biochem.">
        <title>Analysis of genes involved in the biosynthesis of lantibiotic epidermin.</title>
        <authorList>
            <person name="Schnell N."/>
            <person name="Engelke G."/>
            <person name="Augustin J."/>
            <person name="Rosenstein R."/>
            <person name="Ungermann V."/>
            <person name="Goetz F."/>
            <person name="Entian K.-D."/>
        </authorList>
    </citation>
    <scope>NUCLEOTIDE SEQUENCE [GENOMIC DNA]</scope>
    <source>
        <strain>TU 3298 / DSM 3095</strain>
    </source>
</reference>
<reference key="3">
    <citation type="journal article" date="1986" name="Eur. J. Biochem.">
        <title>Epidermin: sequencing of a heterodetic tetracyclic 21-peptide amide antibiotic.</title>
        <authorList>
            <person name="Allgaier H."/>
            <person name="Jung G."/>
            <person name="Werner R.G."/>
            <person name="Schneider U."/>
            <person name="Zahner H."/>
        </authorList>
    </citation>
    <scope>PROTEIN SEQUENCE OF 31-52</scope>
    <scope>DEHYDRATION AT THR-44</scope>
    <scope>LANTHIONINE CROSS-LINKS</scope>
</reference>
<reference key="4">
    <citation type="journal article" date="2000" name="EMBO J.">
        <title>Crystal structure of the peptidyl-cysteine decarboxylase EpiD complexed with a pentapeptide substrate.</title>
        <authorList>
            <person name="Blaesse M."/>
            <person name="Kupke T."/>
            <person name="Huber R."/>
            <person name="Steinbacher S."/>
        </authorList>
    </citation>
    <scope>X-RAY CRYSTALLOGRAPHY (2.57 ANGSTROMS) OF 48-52 IN COMPLEX WITH EPID</scope>
</reference>